<evidence type="ECO:0000250" key="1"/>
<evidence type="ECO:0000255" key="2"/>
<evidence type="ECO:0000256" key="3">
    <source>
        <dbReference type="SAM" id="MobiDB-lite"/>
    </source>
</evidence>
<evidence type="ECO:0000305" key="4"/>
<feature type="chain" id="PRO_0000079595" description="Pre-mRNA-splicing factor CWC25">
    <location>
        <begin position="1"/>
        <end position="561"/>
    </location>
</feature>
<feature type="region of interest" description="Disordered" evidence="3">
    <location>
        <begin position="1"/>
        <end position="21"/>
    </location>
</feature>
<feature type="region of interest" description="Disordered" evidence="3">
    <location>
        <begin position="122"/>
        <end position="561"/>
    </location>
</feature>
<feature type="coiled-coil region" evidence="2">
    <location>
        <begin position="19"/>
        <end position="65"/>
    </location>
</feature>
<feature type="coiled-coil region" evidence="2">
    <location>
        <begin position="326"/>
        <end position="389"/>
    </location>
</feature>
<feature type="compositionally biased region" description="Basic and acidic residues" evidence="3">
    <location>
        <begin position="122"/>
        <end position="132"/>
    </location>
</feature>
<feature type="compositionally biased region" description="Basic and acidic residues" evidence="3">
    <location>
        <begin position="163"/>
        <end position="223"/>
    </location>
</feature>
<feature type="compositionally biased region" description="Basic and acidic residues" evidence="3">
    <location>
        <begin position="230"/>
        <end position="308"/>
    </location>
</feature>
<feature type="compositionally biased region" description="Low complexity" evidence="3">
    <location>
        <begin position="311"/>
        <end position="324"/>
    </location>
</feature>
<feature type="compositionally biased region" description="Basic and acidic residues" evidence="3">
    <location>
        <begin position="325"/>
        <end position="355"/>
    </location>
</feature>
<feature type="compositionally biased region" description="Polar residues" evidence="3">
    <location>
        <begin position="380"/>
        <end position="390"/>
    </location>
</feature>
<feature type="compositionally biased region" description="Basic and acidic residues" evidence="3">
    <location>
        <begin position="413"/>
        <end position="438"/>
    </location>
</feature>
<feature type="compositionally biased region" description="Low complexity" evidence="3">
    <location>
        <begin position="455"/>
        <end position="470"/>
    </location>
</feature>
<feature type="compositionally biased region" description="Polar residues" evidence="3">
    <location>
        <begin position="471"/>
        <end position="488"/>
    </location>
</feature>
<feature type="compositionally biased region" description="Basic and acidic residues" evidence="3">
    <location>
        <begin position="496"/>
        <end position="539"/>
    </location>
</feature>
<feature type="compositionally biased region" description="Basic and acidic residues" evidence="3">
    <location>
        <begin position="547"/>
        <end position="561"/>
    </location>
</feature>
<reference key="1">
    <citation type="journal article" date="2004" name="Nature">
        <title>Genome evolution in yeasts.</title>
        <authorList>
            <person name="Dujon B."/>
            <person name="Sherman D."/>
            <person name="Fischer G."/>
            <person name="Durrens P."/>
            <person name="Casaregola S."/>
            <person name="Lafontaine I."/>
            <person name="de Montigny J."/>
            <person name="Marck C."/>
            <person name="Neuveglise C."/>
            <person name="Talla E."/>
            <person name="Goffard N."/>
            <person name="Frangeul L."/>
            <person name="Aigle M."/>
            <person name="Anthouard V."/>
            <person name="Babour A."/>
            <person name="Barbe V."/>
            <person name="Barnay S."/>
            <person name="Blanchin S."/>
            <person name="Beckerich J.-M."/>
            <person name="Beyne E."/>
            <person name="Bleykasten C."/>
            <person name="Boisrame A."/>
            <person name="Boyer J."/>
            <person name="Cattolico L."/>
            <person name="Confanioleri F."/>
            <person name="de Daruvar A."/>
            <person name="Despons L."/>
            <person name="Fabre E."/>
            <person name="Fairhead C."/>
            <person name="Ferry-Dumazet H."/>
            <person name="Groppi A."/>
            <person name="Hantraye F."/>
            <person name="Hennequin C."/>
            <person name="Jauniaux N."/>
            <person name="Joyet P."/>
            <person name="Kachouri R."/>
            <person name="Kerrest A."/>
            <person name="Koszul R."/>
            <person name="Lemaire M."/>
            <person name="Lesur I."/>
            <person name="Ma L."/>
            <person name="Muller H."/>
            <person name="Nicaud J.-M."/>
            <person name="Nikolski M."/>
            <person name="Oztas S."/>
            <person name="Ozier-Kalogeropoulos O."/>
            <person name="Pellenz S."/>
            <person name="Potier S."/>
            <person name="Richard G.-F."/>
            <person name="Straub M.-L."/>
            <person name="Suleau A."/>
            <person name="Swennen D."/>
            <person name="Tekaia F."/>
            <person name="Wesolowski-Louvel M."/>
            <person name="Westhof E."/>
            <person name="Wirth B."/>
            <person name="Zeniou-Meyer M."/>
            <person name="Zivanovic Y."/>
            <person name="Bolotin-Fukuhara M."/>
            <person name="Thierry A."/>
            <person name="Bouchier C."/>
            <person name="Caudron B."/>
            <person name="Scarpelli C."/>
            <person name="Gaillardin C."/>
            <person name="Weissenbach J."/>
            <person name="Wincker P."/>
            <person name="Souciet J.-L."/>
        </authorList>
    </citation>
    <scope>NUCLEOTIDE SEQUENCE [LARGE SCALE GENOMIC DNA]</scope>
    <source>
        <strain>CLIB 122 / E 150</strain>
    </source>
</reference>
<accession>Q6C1V6</accession>
<sequence>MPGDLNLKKSWHPGLHKNQAVVHAKEQEALEERRRIQERQKEIKQQRERDELQKLQEMATGKKRVQKVEWMYQDPTAVGSQQAFNEKKVDANSTDDYLLGKRRIDSIVKQKGDLEAFDDSLDRFQPKTDKSESAGIVHKVKDDPMVAVRQKGRELGYTDEANESERRSRRERSRSRERERRRPRRKREDSRDRRNRRDMEREGERRRRRRDGERTRRRERNRDPSPSVSDDDRGYRQSSREERDRKSSREEGGRSRSRDRYRNRSRERYRDRSREERSRDRSRERLRSRRDRDRDRDRDRDRDRDRDNVQSSGRSSGRSSVRSSARSERSLRDRSRSRDPDRDRDYRSRSRERDSGGGQGSDLSDEVGNGRSVLDERSTDMNASDGNSSHGYRADNEFSPSRSPVTRSHRDKRNSYRPEYKDEDDKRFAQRKDKEKEMNALPKGLQQMRAKLLASKKTTTVSGTSQTPTSAPSGSQRTPSAASGSSPTGKAATDAKLSDRLARLKAMQEDAKALEEERDERLASKTKHEEAERLRDALLRQKSAHLGRSEFAREEERKDLK</sequence>
<name>CWC25_YARLI</name>
<proteinExistence type="inferred from homology"/>
<comment type="function">
    <text evidence="1">Involved in pre-mRNA splicing.</text>
</comment>
<comment type="subunit">
    <text evidence="1">Associated with the spliceosome.</text>
</comment>
<comment type="subcellular location">
    <subcellularLocation>
        <location evidence="1">Nucleus</location>
    </subcellularLocation>
</comment>
<comment type="similarity">
    <text evidence="4">Belongs to the CWC25 family.</text>
</comment>
<protein>
    <recommendedName>
        <fullName>Pre-mRNA-splicing factor CWC25</fullName>
    </recommendedName>
</protein>
<keyword id="KW-0175">Coiled coil</keyword>
<keyword id="KW-0507">mRNA processing</keyword>
<keyword id="KW-0508">mRNA splicing</keyword>
<keyword id="KW-0539">Nucleus</keyword>
<keyword id="KW-1185">Reference proteome</keyword>
<keyword id="KW-0747">Spliceosome</keyword>
<organism>
    <name type="scientific">Yarrowia lipolytica (strain CLIB 122 / E 150)</name>
    <name type="common">Yeast</name>
    <name type="synonym">Candida lipolytica</name>
    <dbReference type="NCBI Taxonomy" id="284591"/>
    <lineage>
        <taxon>Eukaryota</taxon>
        <taxon>Fungi</taxon>
        <taxon>Dikarya</taxon>
        <taxon>Ascomycota</taxon>
        <taxon>Saccharomycotina</taxon>
        <taxon>Dipodascomycetes</taxon>
        <taxon>Dipodascales</taxon>
        <taxon>Dipodascales incertae sedis</taxon>
        <taxon>Yarrowia</taxon>
    </lineage>
</organism>
<gene>
    <name type="primary">CWC25</name>
    <name type="ordered locus">YALI0F13057g</name>
</gene>
<dbReference type="EMBL" id="CR382132">
    <property type="protein sequence ID" value="CAG78163.1"/>
    <property type="molecule type" value="Genomic_DNA"/>
</dbReference>
<dbReference type="RefSeq" id="XP_505356.1">
    <property type="nucleotide sequence ID" value="XM_505356.1"/>
</dbReference>
<dbReference type="SMR" id="Q6C1V6"/>
<dbReference type="STRING" id="284591.Q6C1V6"/>
<dbReference type="EnsemblFungi" id="CAG78163">
    <property type="protein sequence ID" value="CAG78163"/>
    <property type="gene ID" value="YALI0_F13057g"/>
</dbReference>
<dbReference type="KEGG" id="yli:2909011"/>
<dbReference type="VEuPathDB" id="FungiDB:YALI0_F13057g"/>
<dbReference type="HOGENOM" id="CLU_485892_0_0_1"/>
<dbReference type="InParanoid" id="Q6C1V6"/>
<dbReference type="OMA" id="HESEDPC"/>
<dbReference type="OrthoDB" id="123666at4891"/>
<dbReference type="Proteomes" id="UP000001300">
    <property type="component" value="Chromosome F"/>
</dbReference>
<dbReference type="GO" id="GO:0005684">
    <property type="term" value="C:U2-type spliceosomal complex"/>
    <property type="evidence" value="ECO:0000318"/>
    <property type="project" value="GO_Central"/>
</dbReference>
<dbReference type="GO" id="GO:0000398">
    <property type="term" value="P:mRNA splicing, via spliceosome"/>
    <property type="evidence" value="ECO:0000318"/>
    <property type="project" value="GO_Central"/>
</dbReference>
<dbReference type="InterPro" id="IPR019339">
    <property type="entry name" value="CIR_N_dom"/>
</dbReference>
<dbReference type="InterPro" id="IPR022209">
    <property type="entry name" value="CWC25"/>
</dbReference>
<dbReference type="InterPro" id="IPR051376">
    <property type="entry name" value="CWC25_splicing_factor"/>
</dbReference>
<dbReference type="PANTHER" id="PTHR16196">
    <property type="entry name" value="CELL CYCLE CONTROL PROTEIN CWF25"/>
    <property type="match status" value="1"/>
</dbReference>
<dbReference type="PANTHER" id="PTHR16196:SF0">
    <property type="entry name" value="PRE-MRNA-SPLICING FACTOR CWC25 HOMOLOG"/>
    <property type="match status" value="1"/>
</dbReference>
<dbReference type="Pfam" id="PF10197">
    <property type="entry name" value="Cir_N"/>
    <property type="match status" value="1"/>
</dbReference>
<dbReference type="Pfam" id="PF12542">
    <property type="entry name" value="CWC25"/>
    <property type="match status" value="1"/>
</dbReference>
<dbReference type="SMART" id="SM01083">
    <property type="entry name" value="Cir_N"/>
    <property type="match status" value="1"/>
</dbReference>